<feature type="signal peptide">
    <location>
        <begin position="1"/>
        <end position="19"/>
    </location>
</feature>
<feature type="chain" id="PRO_0000024910" description="Periplasmic pectate lyase">
    <location>
        <begin position="20"/>
        <end position="568"/>
    </location>
</feature>
<gene>
    <name type="primary">pelB</name>
</gene>
<sequence length="568" mass="63524">MKRFALSLLAGLVALQASAATPDRLTIVNQYVDNVLTKAGDHYHGQSPTPLLADGVDPRTGKQMEWIFPDGRHAVLSNFSAQQNLMRVLVGLSNLSGNPSYKQRAEAIVKYHFQHYQDESGLLIWGGHRFVDLKTLQPEGPSEKEMVHELKNAYPYYDLMFSVDKDATARFIRGFWNAHVYDWKIMETSRHGKYGQKIGALWQSPFEQQPPFFATKGLSFLNAGNDLIYSASLLYKYNKEDGALVWAKRLAQQYVLPRDKATGLGVYQFTQALKRDETTDDADTHSKYGDRAQRQFGPEFGPTALEGNMMLKGRTSTIYSENALMQLQLGKDLGAEGKELLTWTTDGLKAFAKYAYNESDNTFRPMLANGKDLSNYVLPRDGYYGKKGTVIKPYPADNSFLLSYARAYTVLPDAELWRVARGIARAQGLGELGSAPGKDVKVDLATKNNDPYALFALLDLYQASKVKDYLSLAEKVGDNIISTRYQNGFFMAEPNRQYADVDTIEPYALLALEAAVRNQPQSVAPFLNGAGFTEGGYRMEDGSTRVSTRDNEIFLLNVGETLKPNNKK</sequence>
<protein>
    <recommendedName>
        <fullName>Periplasmic pectate lyase</fullName>
        <ecNumber>4.2.2.2</ecNumber>
    </recommendedName>
</protein>
<reference key="1">
    <citation type="journal article" date="1989" name="Mol. Microbiol.">
        <title>Extracellular and periplasmic isoenzymes of pectate lyase from Erwinia carotovora subspecies carotovora belong to different gene families.</title>
        <authorList>
            <person name="Hinton J.C.D."/>
            <person name="Sidebotham J.M."/>
            <person name="Gill D.R."/>
            <person name="Salmond G.P.C."/>
        </authorList>
    </citation>
    <scope>NUCLEOTIDE SEQUENCE [GENOMIC DNA]</scope>
    <source>
        <strain>SCRI 193</strain>
    </source>
</reference>
<keyword id="KW-0456">Lyase</keyword>
<keyword id="KW-0574">Periplasm</keyword>
<keyword id="KW-0732">Signal</keyword>
<accession>P14005</accession>
<evidence type="ECO:0000305" key="1"/>
<proteinExistence type="inferred from homology"/>
<organism>
    <name type="scientific">Pectobacterium carotovorum subsp. carotovorum</name>
    <name type="common">Erwinia carotovora subsp. carotovora</name>
    <dbReference type="NCBI Taxonomy" id="555"/>
    <lineage>
        <taxon>Bacteria</taxon>
        <taxon>Pseudomonadati</taxon>
        <taxon>Pseudomonadota</taxon>
        <taxon>Gammaproteobacteria</taxon>
        <taxon>Enterobacterales</taxon>
        <taxon>Pectobacteriaceae</taxon>
        <taxon>Pectobacterium</taxon>
    </lineage>
</organism>
<dbReference type="EC" id="4.2.2.2"/>
<dbReference type="EMBL" id="X16397">
    <property type="protein sequence ID" value="CAA34432.1"/>
    <property type="molecule type" value="Genomic_DNA"/>
</dbReference>
<dbReference type="PIR" id="S07653">
    <property type="entry name" value="WZWCCC"/>
</dbReference>
<dbReference type="RefSeq" id="WP_039473295.1">
    <property type="nucleotide sequence ID" value="NZ_JUJS01000001.1"/>
</dbReference>
<dbReference type="SMR" id="P14005"/>
<dbReference type="CAZy" id="PL2">
    <property type="family name" value="Polysaccharide Lyase Family 2"/>
</dbReference>
<dbReference type="UniPathway" id="UPA00545">
    <property type="reaction ID" value="UER00824"/>
</dbReference>
<dbReference type="GO" id="GO:0042597">
    <property type="term" value="C:periplasmic space"/>
    <property type="evidence" value="ECO:0007669"/>
    <property type="project" value="UniProtKB-SubCell"/>
</dbReference>
<dbReference type="GO" id="GO:0030570">
    <property type="term" value="F:pectate lyase activity"/>
    <property type="evidence" value="ECO:0007669"/>
    <property type="project" value="UniProtKB-EC"/>
</dbReference>
<dbReference type="GO" id="GO:0045490">
    <property type="term" value="P:pectin catabolic process"/>
    <property type="evidence" value="ECO:0007669"/>
    <property type="project" value="UniProtKB-UniPathway"/>
</dbReference>
<dbReference type="Gene3D" id="1.50.10.20">
    <property type="match status" value="1"/>
</dbReference>
<dbReference type="Gene3D" id="2.30.30.880">
    <property type="match status" value="1"/>
</dbReference>
<dbReference type="Gene3D" id="3.90.105.40">
    <property type="match status" value="1"/>
</dbReference>
<dbReference type="InterPro" id="IPR010702">
    <property type="entry name" value="Pectate_lyase_2"/>
</dbReference>
<dbReference type="Pfam" id="PF06917">
    <property type="entry name" value="Pectate_lyase_2"/>
    <property type="match status" value="1"/>
</dbReference>
<dbReference type="PIRSF" id="PIRSF001432">
    <property type="entry name" value="Pect_lyase"/>
    <property type="match status" value="1"/>
</dbReference>
<name>PLYP_PECCC</name>
<comment type="catalytic activity">
    <reaction>
        <text>Eliminative cleavage of (1-&gt;4)-alpha-D-galacturonan to give oligosaccharides with 4-deoxy-alpha-D-galact-4-enuronosyl groups at their non-reducing ends.</text>
        <dbReference type="EC" id="4.2.2.2"/>
    </reaction>
</comment>
<comment type="pathway">
    <text>Glycan metabolism; pectin degradation; 2-dehydro-3-deoxy-D-gluconate from pectin: step 2/5.</text>
</comment>
<comment type="subcellular location">
    <subcellularLocation>
        <location>Periplasm</location>
    </subcellularLocation>
</comment>
<comment type="similarity">
    <text evidence="1">Belongs to the polysaccharide lyase 2 family.</text>
</comment>